<comment type="function">
    <text evidence="1">Tetrapolymerization of the monopyrrole PBG into the hydroxymethylbilane pre-uroporphyrinogen in several discrete steps.</text>
</comment>
<comment type="catalytic activity">
    <reaction>
        <text>4 porphobilinogen + H2O = hydroxymethylbilane + 4 NH4(+)</text>
        <dbReference type="Rhea" id="RHEA:13185"/>
        <dbReference type="ChEBI" id="CHEBI:15377"/>
        <dbReference type="ChEBI" id="CHEBI:28938"/>
        <dbReference type="ChEBI" id="CHEBI:57845"/>
        <dbReference type="ChEBI" id="CHEBI:58126"/>
        <dbReference type="EC" id="2.5.1.61"/>
    </reaction>
</comment>
<comment type="cofactor">
    <cofactor evidence="1">
        <name>dipyrromethane</name>
        <dbReference type="ChEBI" id="CHEBI:60342"/>
    </cofactor>
    <text evidence="1">Binds 1 dipyrromethane group covalently.</text>
</comment>
<comment type="pathway">
    <text>Porphyrin-containing compound metabolism; protoporphyrin-IX biosynthesis; coproporphyrinogen-III from 5-aminolevulinate: step 2/4.</text>
</comment>
<comment type="subunit">
    <text evidence="1">Monomer.</text>
</comment>
<comment type="miscellaneous">
    <text evidence="1">The porphobilinogen subunits are added to the dipyrromethane group.</text>
</comment>
<comment type="similarity">
    <text evidence="2">Belongs to the HMBS family.</text>
</comment>
<reference key="1">
    <citation type="journal article" date="2000" name="Science">
        <title>Complete genome sequence of Neisseria meningitidis serogroup B strain MC58.</title>
        <authorList>
            <person name="Tettelin H."/>
            <person name="Saunders N.J."/>
            <person name="Heidelberg J.F."/>
            <person name="Jeffries A.C."/>
            <person name="Nelson K.E."/>
            <person name="Eisen J.A."/>
            <person name="Ketchum K.A."/>
            <person name="Hood D.W."/>
            <person name="Peden J.F."/>
            <person name="Dodson R.J."/>
            <person name="Nelson W.C."/>
            <person name="Gwinn M.L."/>
            <person name="DeBoy R.T."/>
            <person name="Peterson J.D."/>
            <person name="Hickey E.K."/>
            <person name="Haft D.H."/>
            <person name="Salzberg S.L."/>
            <person name="White O."/>
            <person name="Fleischmann R.D."/>
            <person name="Dougherty B.A."/>
            <person name="Mason T.M."/>
            <person name="Ciecko A."/>
            <person name="Parksey D.S."/>
            <person name="Blair E."/>
            <person name="Cittone H."/>
            <person name="Clark E.B."/>
            <person name="Cotton M.D."/>
            <person name="Utterback T.R."/>
            <person name="Khouri H.M."/>
            <person name="Qin H."/>
            <person name="Vamathevan J.J."/>
            <person name="Gill J."/>
            <person name="Scarlato V."/>
            <person name="Masignani V."/>
            <person name="Pizza M."/>
            <person name="Grandi G."/>
            <person name="Sun L."/>
            <person name="Smith H.O."/>
            <person name="Fraser C.M."/>
            <person name="Moxon E.R."/>
            <person name="Rappuoli R."/>
            <person name="Venter J.C."/>
        </authorList>
    </citation>
    <scope>NUCLEOTIDE SEQUENCE [LARGE SCALE GENOMIC DNA]</scope>
    <source>
        <strain>ATCC BAA-335 / MC58</strain>
    </source>
</reference>
<name>HEM3_NEIMB</name>
<dbReference type="EC" id="2.5.1.61"/>
<dbReference type="EMBL" id="AE002098">
    <property type="protein sequence ID" value="AAF40968.1"/>
    <property type="molecule type" value="Genomic_DNA"/>
</dbReference>
<dbReference type="PIR" id="B81188">
    <property type="entry name" value="B81188"/>
</dbReference>
<dbReference type="RefSeq" id="NP_273584.1">
    <property type="nucleotide sequence ID" value="NC_003112.2"/>
</dbReference>
<dbReference type="RefSeq" id="WP_002217854.1">
    <property type="nucleotide sequence ID" value="NC_003112.2"/>
</dbReference>
<dbReference type="SMR" id="Q9K0P6"/>
<dbReference type="FunCoup" id="Q9K0P6">
    <property type="interactions" value="495"/>
</dbReference>
<dbReference type="STRING" id="122586.NMB0539"/>
<dbReference type="PaxDb" id="122586-NMB0539"/>
<dbReference type="KEGG" id="nme:NMB0539"/>
<dbReference type="PATRIC" id="fig|122586.8.peg.686"/>
<dbReference type="HOGENOM" id="CLU_019704_0_2_4"/>
<dbReference type="InParanoid" id="Q9K0P6"/>
<dbReference type="OrthoDB" id="9810298at2"/>
<dbReference type="UniPathway" id="UPA00251">
    <property type="reaction ID" value="UER00319"/>
</dbReference>
<dbReference type="Proteomes" id="UP000000425">
    <property type="component" value="Chromosome"/>
</dbReference>
<dbReference type="GO" id="GO:0005737">
    <property type="term" value="C:cytoplasm"/>
    <property type="evidence" value="ECO:0000318"/>
    <property type="project" value="GO_Central"/>
</dbReference>
<dbReference type="GO" id="GO:0004418">
    <property type="term" value="F:hydroxymethylbilane synthase activity"/>
    <property type="evidence" value="ECO:0000318"/>
    <property type="project" value="GO_Central"/>
</dbReference>
<dbReference type="GO" id="GO:0006783">
    <property type="term" value="P:heme biosynthetic process"/>
    <property type="evidence" value="ECO:0000318"/>
    <property type="project" value="GO_Central"/>
</dbReference>
<dbReference type="GO" id="GO:0006782">
    <property type="term" value="P:protoporphyrinogen IX biosynthetic process"/>
    <property type="evidence" value="ECO:0007669"/>
    <property type="project" value="UniProtKB-UniRule"/>
</dbReference>
<dbReference type="CDD" id="cd13646">
    <property type="entry name" value="PBP2_EcHMBS_like"/>
    <property type="match status" value="1"/>
</dbReference>
<dbReference type="FunFam" id="3.30.160.40:FF:000001">
    <property type="entry name" value="Porphobilinogen deaminase"/>
    <property type="match status" value="1"/>
</dbReference>
<dbReference type="FunFam" id="3.40.190.10:FF:000004">
    <property type="entry name" value="Porphobilinogen deaminase"/>
    <property type="match status" value="1"/>
</dbReference>
<dbReference type="FunFam" id="3.40.190.10:FF:000005">
    <property type="entry name" value="Porphobilinogen deaminase"/>
    <property type="match status" value="1"/>
</dbReference>
<dbReference type="Gene3D" id="3.40.190.10">
    <property type="entry name" value="Periplasmic binding protein-like II"/>
    <property type="match status" value="2"/>
</dbReference>
<dbReference type="Gene3D" id="3.30.160.40">
    <property type="entry name" value="Porphobilinogen deaminase, C-terminal domain"/>
    <property type="match status" value="1"/>
</dbReference>
<dbReference type="HAMAP" id="MF_00260">
    <property type="entry name" value="Porphobil_deam"/>
    <property type="match status" value="1"/>
</dbReference>
<dbReference type="InterPro" id="IPR000860">
    <property type="entry name" value="HemC"/>
</dbReference>
<dbReference type="InterPro" id="IPR022419">
    <property type="entry name" value="Porphobilin_deaminase_cofac_BS"/>
</dbReference>
<dbReference type="InterPro" id="IPR022417">
    <property type="entry name" value="Porphobilin_deaminase_N"/>
</dbReference>
<dbReference type="InterPro" id="IPR022418">
    <property type="entry name" value="Porphobilinogen_deaminase_C"/>
</dbReference>
<dbReference type="InterPro" id="IPR036803">
    <property type="entry name" value="Porphobilinogen_deaminase_C_sf"/>
</dbReference>
<dbReference type="NCBIfam" id="TIGR00212">
    <property type="entry name" value="hemC"/>
    <property type="match status" value="1"/>
</dbReference>
<dbReference type="PANTHER" id="PTHR11557">
    <property type="entry name" value="PORPHOBILINOGEN DEAMINASE"/>
    <property type="match status" value="1"/>
</dbReference>
<dbReference type="PANTHER" id="PTHR11557:SF0">
    <property type="entry name" value="PORPHOBILINOGEN DEAMINASE"/>
    <property type="match status" value="1"/>
</dbReference>
<dbReference type="Pfam" id="PF01379">
    <property type="entry name" value="Porphobil_deam"/>
    <property type="match status" value="1"/>
</dbReference>
<dbReference type="Pfam" id="PF03900">
    <property type="entry name" value="Porphobil_deamC"/>
    <property type="match status" value="1"/>
</dbReference>
<dbReference type="PIRSF" id="PIRSF001438">
    <property type="entry name" value="4pyrrol_synth_OHMeBilane_synth"/>
    <property type="match status" value="1"/>
</dbReference>
<dbReference type="PRINTS" id="PR00151">
    <property type="entry name" value="PORPHBDMNASE"/>
</dbReference>
<dbReference type="SUPFAM" id="SSF53850">
    <property type="entry name" value="Periplasmic binding protein-like II"/>
    <property type="match status" value="1"/>
</dbReference>
<dbReference type="SUPFAM" id="SSF54782">
    <property type="entry name" value="Porphobilinogen deaminase (hydroxymethylbilane synthase), C-terminal domain"/>
    <property type="match status" value="1"/>
</dbReference>
<dbReference type="PROSITE" id="PS00533">
    <property type="entry name" value="PORPHOBILINOGEN_DEAM"/>
    <property type="match status" value="1"/>
</dbReference>
<sequence length="311" mass="33478">MNPKKLVIASRESLLAMWQAKHIQGRLKALYPDCEVEILGMTTRGDQILDKTLSKVGGKGLFVKELEQALYDGRADLAVHSIKDVPMDLPEGFALAAIGERANPFDAFVSNQYTRLEEMPEGAVVGTSSLRREAQLRARYPHLLIKPLRGNVQTRLSKLDNGEYDAIILAAAGLQRLKLDGRIRMILSESDSLPAAGQGALGIEIAAHREDLYEVLKPLNHGVTNACVTAERALARALGGSCQVPLAAYCTEENGLLTLRGLVGHPDGSVVLRADAQAPAEYADALGRAVAKKLADDGARELIGAVLNTEN</sequence>
<accession>Q9K0P6</accession>
<keyword id="KW-0627">Porphyrin biosynthesis</keyword>
<keyword id="KW-1185">Reference proteome</keyword>
<keyword id="KW-0808">Transferase</keyword>
<proteinExistence type="inferred from homology"/>
<evidence type="ECO:0000250" key="1"/>
<evidence type="ECO:0000305" key="2"/>
<gene>
    <name type="primary">hemC</name>
    <name type="ordered locus">NMB0539</name>
</gene>
<organism>
    <name type="scientific">Neisseria meningitidis serogroup B (strain ATCC BAA-335 / MC58)</name>
    <dbReference type="NCBI Taxonomy" id="122586"/>
    <lineage>
        <taxon>Bacteria</taxon>
        <taxon>Pseudomonadati</taxon>
        <taxon>Pseudomonadota</taxon>
        <taxon>Betaproteobacteria</taxon>
        <taxon>Neisseriales</taxon>
        <taxon>Neisseriaceae</taxon>
        <taxon>Neisseria</taxon>
    </lineage>
</organism>
<feature type="chain" id="PRO_0000142962" description="Porphobilinogen deaminase">
    <location>
        <begin position="1"/>
        <end position="311"/>
    </location>
</feature>
<feature type="modified residue" description="S-(dipyrrolylmethanemethyl)cysteine" evidence="1">
    <location>
        <position position="242"/>
    </location>
</feature>
<protein>
    <recommendedName>
        <fullName>Porphobilinogen deaminase</fullName>
        <shortName>PBG</shortName>
        <ecNumber>2.5.1.61</ecNumber>
    </recommendedName>
    <alternativeName>
        <fullName>Hydroxymethylbilane synthase</fullName>
        <shortName>HMBS</shortName>
    </alternativeName>
    <alternativeName>
        <fullName>Pre-uroporphyrinogen synthase</fullName>
    </alternativeName>
</protein>